<comment type="similarity">
    <text evidence="1">Belongs to the UPF0102 family.</text>
</comment>
<name>Y3900_BURP0</name>
<evidence type="ECO:0000255" key="1">
    <source>
        <dbReference type="HAMAP-Rule" id="MF_00048"/>
    </source>
</evidence>
<evidence type="ECO:0000256" key="2">
    <source>
        <dbReference type="SAM" id="MobiDB-lite"/>
    </source>
</evidence>
<accession>A3P0J9</accession>
<organism>
    <name type="scientific">Burkholderia pseudomallei (strain 1106a)</name>
    <dbReference type="NCBI Taxonomy" id="357348"/>
    <lineage>
        <taxon>Bacteria</taxon>
        <taxon>Pseudomonadati</taxon>
        <taxon>Pseudomonadota</taxon>
        <taxon>Betaproteobacteria</taxon>
        <taxon>Burkholderiales</taxon>
        <taxon>Burkholderiaceae</taxon>
        <taxon>Burkholderia</taxon>
        <taxon>pseudomallei group</taxon>
    </lineage>
</organism>
<protein>
    <recommendedName>
        <fullName evidence="1">UPF0102 protein BURPS1106A_3900</fullName>
    </recommendedName>
</protein>
<dbReference type="EMBL" id="CP000572">
    <property type="protein sequence ID" value="ABN90473.1"/>
    <property type="molecule type" value="Genomic_DNA"/>
</dbReference>
<dbReference type="SMR" id="A3P0J9"/>
<dbReference type="KEGG" id="bpl:BURPS1106A_3900"/>
<dbReference type="HOGENOM" id="CLU_115353_1_0_4"/>
<dbReference type="Proteomes" id="UP000006738">
    <property type="component" value="Chromosome I"/>
</dbReference>
<dbReference type="GO" id="GO:0003676">
    <property type="term" value="F:nucleic acid binding"/>
    <property type="evidence" value="ECO:0007669"/>
    <property type="project" value="InterPro"/>
</dbReference>
<dbReference type="Gene3D" id="3.40.1350.10">
    <property type="match status" value="1"/>
</dbReference>
<dbReference type="HAMAP" id="MF_00048">
    <property type="entry name" value="UPF0102"/>
    <property type="match status" value="1"/>
</dbReference>
<dbReference type="InterPro" id="IPR011335">
    <property type="entry name" value="Restrct_endonuc-II-like"/>
</dbReference>
<dbReference type="InterPro" id="IPR011856">
    <property type="entry name" value="tRNA_endonuc-like_dom_sf"/>
</dbReference>
<dbReference type="InterPro" id="IPR003509">
    <property type="entry name" value="UPF0102_YraN-like"/>
</dbReference>
<dbReference type="NCBIfam" id="NF009150">
    <property type="entry name" value="PRK12497.1-3"/>
    <property type="match status" value="1"/>
</dbReference>
<dbReference type="NCBIfam" id="TIGR00252">
    <property type="entry name" value="YraN family protein"/>
    <property type="match status" value="1"/>
</dbReference>
<dbReference type="PANTHER" id="PTHR34039">
    <property type="entry name" value="UPF0102 PROTEIN YRAN"/>
    <property type="match status" value="1"/>
</dbReference>
<dbReference type="PANTHER" id="PTHR34039:SF1">
    <property type="entry name" value="UPF0102 PROTEIN YRAN"/>
    <property type="match status" value="1"/>
</dbReference>
<dbReference type="Pfam" id="PF02021">
    <property type="entry name" value="UPF0102"/>
    <property type="match status" value="1"/>
</dbReference>
<dbReference type="SUPFAM" id="SSF52980">
    <property type="entry name" value="Restriction endonuclease-like"/>
    <property type="match status" value="1"/>
</dbReference>
<proteinExistence type="inferred from homology"/>
<reference key="1">
    <citation type="journal article" date="2010" name="Genome Biol. Evol.">
        <title>Continuing evolution of Burkholderia mallei through genome reduction and large-scale rearrangements.</title>
        <authorList>
            <person name="Losada L."/>
            <person name="Ronning C.M."/>
            <person name="DeShazer D."/>
            <person name="Woods D."/>
            <person name="Fedorova N."/>
            <person name="Kim H.S."/>
            <person name="Shabalina S.A."/>
            <person name="Pearson T.R."/>
            <person name="Brinkac L."/>
            <person name="Tan P."/>
            <person name="Nandi T."/>
            <person name="Crabtree J."/>
            <person name="Badger J."/>
            <person name="Beckstrom-Sternberg S."/>
            <person name="Saqib M."/>
            <person name="Schutzer S.E."/>
            <person name="Keim P."/>
            <person name="Nierman W.C."/>
        </authorList>
    </citation>
    <scope>NUCLEOTIDE SEQUENCE [LARGE SCALE GENOMIC DNA]</scope>
    <source>
        <strain>1106a</strain>
    </source>
</reference>
<gene>
    <name type="ordered locus">BURPS1106A_3900</name>
</gene>
<sequence length="144" mass="15531">MCHAREASPGTGEPEAAPRDNFPRAAGSKRGVGAAFETRAQRFLERAGLALVARNVTVRGGEIDLVMRERDGTLVFVEVRARANSRYGGAAASIGARKRMRLLLAAHAFWARTGGANACRFDVVAFEGSRLVWLRDAFRADDAG</sequence>
<feature type="chain" id="PRO_0000336145" description="UPF0102 protein BURPS1106A_3900">
    <location>
        <begin position="1"/>
        <end position="144"/>
    </location>
</feature>
<feature type="region of interest" description="Disordered" evidence="2">
    <location>
        <begin position="1"/>
        <end position="28"/>
    </location>
</feature>